<feature type="chain" id="PRO_0000160932" description="Zinc-type alcohol dehydrogenase-like protein SE_1777">
    <location>
        <begin position="1"/>
        <end position="336"/>
    </location>
</feature>
<protein>
    <recommendedName>
        <fullName>Zinc-type alcohol dehydrogenase-like protein SE_1777</fullName>
    </recommendedName>
</protein>
<comment type="similarity">
    <text evidence="1">Belongs to the zinc-containing alcohol dehydrogenase family. Quinone oxidoreductase subfamily.</text>
</comment>
<evidence type="ECO:0000305" key="1"/>
<sequence>MKAIGFKSSFQLDEGNCFEEFNFDIPHPSGHELLVKVQSISVNPVDTKQRTMPVDKVPRVLGFDAVGVIEKIGDQVSMFQEGDVVFYSGSPNQNGSNEEYQLIEEYLVAKAPTNLKSEQAASLPLTGLTAYETLFDVFGISKEPSENKGKSLLIINGAGGVGSIATQIAKFYGLKVITTASREDTIKWSVNMGADVVLNHKKDLSQQFKDNHIEGVDYIFCTFDTDMYYEMMVNLVKPRGHIATIVAFNSQQDLNLLKSKSVTFTHEFMFSRPLHHTDDVIKHHEYLKDITEKVEQGYYQPTTTKVIDGLDVDSLYEAHQILESHSMIGKLVINLK</sequence>
<dbReference type="EMBL" id="AE015929">
    <property type="protein sequence ID" value="AAO05418.1"/>
    <property type="molecule type" value="Genomic_DNA"/>
</dbReference>
<dbReference type="RefSeq" id="NP_765332.1">
    <property type="nucleotide sequence ID" value="NC_004461.1"/>
</dbReference>
<dbReference type="RefSeq" id="WP_002485388.1">
    <property type="nucleotide sequence ID" value="NZ_WBME01000007.1"/>
</dbReference>
<dbReference type="SMR" id="Q8CRJ7"/>
<dbReference type="KEGG" id="sep:SE_1777"/>
<dbReference type="PATRIC" id="fig|176280.10.peg.1734"/>
<dbReference type="eggNOG" id="COG0604">
    <property type="taxonomic scope" value="Bacteria"/>
</dbReference>
<dbReference type="HOGENOM" id="CLU_026673_3_0_9"/>
<dbReference type="OrthoDB" id="9792162at2"/>
<dbReference type="Proteomes" id="UP000001411">
    <property type="component" value="Chromosome"/>
</dbReference>
<dbReference type="GO" id="GO:0016491">
    <property type="term" value="F:oxidoreductase activity"/>
    <property type="evidence" value="ECO:0007669"/>
    <property type="project" value="UniProtKB-KW"/>
</dbReference>
<dbReference type="GO" id="GO:0008270">
    <property type="term" value="F:zinc ion binding"/>
    <property type="evidence" value="ECO:0007669"/>
    <property type="project" value="InterPro"/>
</dbReference>
<dbReference type="CDD" id="cd08252">
    <property type="entry name" value="AL_MDR"/>
    <property type="match status" value="1"/>
</dbReference>
<dbReference type="Gene3D" id="3.90.180.10">
    <property type="entry name" value="Medium-chain alcohol dehydrogenases, catalytic domain"/>
    <property type="match status" value="1"/>
</dbReference>
<dbReference type="Gene3D" id="3.40.50.720">
    <property type="entry name" value="NAD(P)-binding Rossmann-like Domain"/>
    <property type="match status" value="1"/>
</dbReference>
<dbReference type="InterPro" id="IPR013149">
    <property type="entry name" value="ADH-like_C"/>
</dbReference>
<dbReference type="InterPro" id="IPR013154">
    <property type="entry name" value="ADH-like_N"/>
</dbReference>
<dbReference type="InterPro" id="IPR014182">
    <property type="entry name" value="ADH_Zn_typ-1"/>
</dbReference>
<dbReference type="InterPro" id="IPR011032">
    <property type="entry name" value="GroES-like_sf"/>
</dbReference>
<dbReference type="InterPro" id="IPR036291">
    <property type="entry name" value="NAD(P)-bd_dom_sf"/>
</dbReference>
<dbReference type="InterPro" id="IPR020843">
    <property type="entry name" value="PKS_ER"/>
</dbReference>
<dbReference type="InterPro" id="IPR002364">
    <property type="entry name" value="Quin_OxRdtase/zeta-crystal_CS"/>
</dbReference>
<dbReference type="InterPro" id="IPR050700">
    <property type="entry name" value="YIM1/Zinc_Alcohol_DH_Fams"/>
</dbReference>
<dbReference type="NCBIfam" id="TIGR02817">
    <property type="entry name" value="adh_fam_1"/>
    <property type="match status" value="1"/>
</dbReference>
<dbReference type="PANTHER" id="PTHR11695">
    <property type="entry name" value="ALCOHOL DEHYDROGENASE RELATED"/>
    <property type="match status" value="1"/>
</dbReference>
<dbReference type="PANTHER" id="PTHR11695:SF294">
    <property type="entry name" value="RETICULON-4-INTERACTING PROTEIN 1, MITOCHONDRIAL"/>
    <property type="match status" value="1"/>
</dbReference>
<dbReference type="Pfam" id="PF08240">
    <property type="entry name" value="ADH_N"/>
    <property type="match status" value="1"/>
</dbReference>
<dbReference type="Pfam" id="PF00107">
    <property type="entry name" value="ADH_zinc_N"/>
    <property type="match status" value="1"/>
</dbReference>
<dbReference type="SMART" id="SM00829">
    <property type="entry name" value="PKS_ER"/>
    <property type="match status" value="1"/>
</dbReference>
<dbReference type="SUPFAM" id="SSF50129">
    <property type="entry name" value="GroES-like"/>
    <property type="match status" value="1"/>
</dbReference>
<dbReference type="SUPFAM" id="SSF51735">
    <property type="entry name" value="NAD(P)-binding Rossmann-fold domains"/>
    <property type="match status" value="1"/>
</dbReference>
<dbReference type="PROSITE" id="PS01162">
    <property type="entry name" value="QOR_ZETA_CRYSTAL"/>
    <property type="match status" value="1"/>
</dbReference>
<accession>Q8CRJ7</accession>
<name>ZDH1_STAES</name>
<keyword id="KW-0479">Metal-binding</keyword>
<keyword id="KW-0560">Oxidoreductase</keyword>
<keyword id="KW-0862">Zinc</keyword>
<gene>
    <name type="ordered locus">SE_1777</name>
</gene>
<organism>
    <name type="scientific">Staphylococcus epidermidis (strain ATCC 12228 / FDA PCI 1200)</name>
    <dbReference type="NCBI Taxonomy" id="176280"/>
    <lineage>
        <taxon>Bacteria</taxon>
        <taxon>Bacillati</taxon>
        <taxon>Bacillota</taxon>
        <taxon>Bacilli</taxon>
        <taxon>Bacillales</taxon>
        <taxon>Staphylococcaceae</taxon>
        <taxon>Staphylococcus</taxon>
    </lineage>
</organism>
<proteinExistence type="inferred from homology"/>
<reference key="1">
    <citation type="journal article" date="2003" name="Mol. Microbiol.">
        <title>Genome-based analysis of virulence genes in a non-biofilm-forming Staphylococcus epidermidis strain (ATCC 12228).</title>
        <authorList>
            <person name="Zhang Y.-Q."/>
            <person name="Ren S.-X."/>
            <person name="Li H.-L."/>
            <person name="Wang Y.-X."/>
            <person name="Fu G."/>
            <person name="Yang J."/>
            <person name="Qin Z.-Q."/>
            <person name="Miao Y.-G."/>
            <person name="Wang W.-Y."/>
            <person name="Chen R.-S."/>
            <person name="Shen Y."/>
            <person name="Chen Z."/>
            <person name="Yuan Z.-H."/>
            <person name="Zhao G.-P."/>
            <person name="Qu D."/>
            <person name="Danchin A."/>
            <person name="Wen Y.-M."/>
        </authorList>
    </citation>
    <scope>NUCLEOTIDE SEQUENCE [LARGE SCALE GENOMIC DNA]</scope>
    <source>
        <strain>ATCC 12228 / FDA PCI 1200</strain>
    </source>
</reference>